<sequence length="65" mass="7580">MKAKEWREKSLDEIRQKNKELEEELFNLRMRSAAGQLESSAALGKIKRDIARAKTVLREKGVKEH</sequence>
<proteinExistence type="inferred from homology"/>
<accession>Q2LQB2</accession>
<comment type="similarity">
    <text evidence="1">Belongs to the universal ribosomal protein uL29 family.</text>
</comment>
<gene>
    <name evidence="1" type="primary">rpmC</name>
    <name type="ordered locus">SYNAS_03100</name>
    <name type="ORF">SYN_00993</name>
</gene>
<name>RL29_SYNAS</name>
<reference key="1">
    <citation type="journal article" date="2007" name="Proc. Natl. Acad. Sci. U.S.A.">
        <title>The genome of Syntrophus aciditrophicus: life at the thermodynamic limit of microbial growth.</title>
        <authorList>
            <person name="McInerney M.J."/>
            <person name="Rohlin L."/>
            <person name="Mouttaki H."/>
            <person name="Kim U."/>
            <person name="Krupp R.S."/>
            <person name="Rios-Hernandez L."/>
            <person name="Sieber J."/>
            <person name="Struchtemeyer C.G."/>
            <person name="Bhattacharyya A."/>
            <person name="Campbell J.W."/>
            <person name="Gunsalus R.P."/>
        </authorList>
    </citation>
    <scope>NUCLEOTIDE SEQUENCE [LARGE SCALE GENOMIC DNA]</scope>
    <source>
        <strain>SB</strain>
    </source>
</reference>
<evidence type="ECO:0000255" key="1">
    <source>
        <dbReference type="HAMAP-Rule" id="MF_00374"/>
    </source>
</evidence>
<evidence type="ECO:0000305" key="2"/>
<organism>
    <name type="scientific">Syntrophus aciditrophicus (strain SB)</name>
    <dbReference type="NCBI Taxonomy" id="56780"/>
    <lineage>
        <taxon>Bacteria</taxon>
        <taxon>Pseudomonadati</taxon>
        <taxon>Thermodesulfobacteriota</taxon>
        <taxon>Syntrophia</taxon>
        <taxon>Syntrophales</taxon>
        <taxon>Syntrophaceae</taxon>
        <taxon>Syntrophus</taxon>
    </lineage>
</organism>
<feature type="chain" id="PRO_1000072148" description="Large ribosomal subunit protein uL29">
    <location>
        <begin position="1"/>
        <end position="65"/>
    </location>
</feature>
<protein>
    <recommendedName>
        <fullName evidence="1">Large ribosomal subunit protein uL29</fullName>
    </recommendedName>
    <alternativeName>
        <fullName evidence="2">50S ribosomal protein L29</fullName>
    </alternativeName>
</protein>
<keyword id="KW-1185">Reference proteome</keyword>
<keyword id="KW-0687">Ribonucleoprotein</keyword>
<keyword id="KW-0689">Ribosomal protein</keyword>
<dbReference type="EMBL" id="CP000252">
    <property type="protein sequence ID" value="ABC76189.1"/>
    <property type="molecule type" value="Genomic_DNA"/>
</dbReference>
<dbReference type="RefSeq" id="WP_011416223.1">
    <property type="nucleotide sequence ID" value="NC_007759.1"/>
</dbReference>
<dbReference type="SMR" id="Q2LQB2"/>
<dbReference type="FunCoup" id="Q2LQB2">
    <property type="interactions" value="413"/>
</dbReference>
<dbReference type="STRING" id="56780.SYN_00993"/>
<dbReference type="KEGG" id="sat:SYN_00993"/>
<dbReference type="eggNOG" id="COG0255">
    <property type="taxonomic scope" value="Bacteria"/>
</dbReference>
<dbReference type="HOGENOM" id="CLU_158491_1_2_7"/>
<dbReference type="InParanoid" id="Q2LQB2"/>
<dbReference type="OrthoDB" id="9815192at2"/>
<dbReference type="Proteomes" id="UP000001933">
    <property type="component" value="Chromosome"/>
</dbReference>
<dbReference type="GO" id="GO:0022625">
    <property type="term" value="C:cytosolic large ribosomal subunit"/>
    <property type="evidence" value="ECO:0007669"/>
    <property type="project" value="TreeGrafter"/>
</dbReference>
<dbReference type="GO" id="GO:0003735">
    <property type="term" value="F:structural constituent of ribosome"/>
    <property type="evidence" value="ECO:0007669"/>
    <property type="project" value="InterPro"/>
</dbReference>
<dbReference type="GO" id="GO:0006412">
    <property type="term" value="P:translation"/>
    <property type="evidence" value="ECO:0007669"/>
    <property type="project" value="UniProtKB-UniRule"/>
</dbReference>
<dbReference type="CDD" id="cd00427">
    <property type="entry name" value="Ribosomal_L29_HIP"/>
    <property type="match status" value="1"/>
</dbReference>
<dbReference type="FunFam" id="1.10.287.310:FF:000001">
    <property type="entry name" value="50S ribosomal protein L29"/>
    <property type="match status" value="1"/>
</dbReference>
<dbReference type="Gene3D" id="1.10.287.310">
    <property type="match status" value="1"/>
</dbReference>
<dbReference type="HAMAP" id="MF_00374">
    <property type="entry name" value="Ribosomal_uL29"/>
    <property type="match status" value="1"/>
</dbReference>
<dbReference type="InterPro" id="IPR050063">
    <property type="entry name" value="Ribosomal_protein_uL29"/>
</dbReference>
<dbReference type="InterPro" id="IPR001854">
    <property type="entry name" value="Ribosomal_uL29"/>
</dbReference>
<dbReference type="InterPro" id="IPR018254">
    <property type="entry name" value="Ribosomal_uL29_CS"/>
</dbReference>
<dbReference type="InterPro" id="IPR036049">
    <property type="entry name" value="Ribosomal_uL29_sf"/>
</dbReference>
<dbReference type="NCBIfam" id="TIGR00012">
    <property type="entry name" value="L29"/>
    <property type="match status" value="1"/>
</dbReference>
<dbReference type="PANTHER" id="PTHR10916">
    <property type="entry name" value="60S RIBOSOMAL PROTEIN L35/50S RIBOSOMAL PROTEIN L29"/>
    <property type="match status" value="1"/>
</dbReference>
<dbReference type="PANTHER" id="PTHR10916:SF0">
    <property type="entry name" value="LARGE RIBOSOMAL SUBUNIT PROTEIN UL29C"/>
    <property type="match status" value="1"/>
</dbReference>
<dbReference type="Pfam" id="PF00831">
    <property type="entry name" value="Ribosomal_L29"/>
    <property type="match status" value="1"/>
</dbReference>
<dbReference type="SUPFAM" id="SSF46561">
    <property type="entry name" value="Ribosomal protein L29 (L29p)"/>
    <property type="match status" value="1"/>
</dbReference>
<dbReference type="PROSITE" id="PS00579">
    <property type="entry name" value="RIBOSOMAL_L29"/>
    <property type="match status" value="1"/>
</dbReference>